<sequence length="526" mass="55359">MNVLSAALTEAMTTSSADLVVFEPETRTWHRHPWGQVHLRAQNVAERIGQDGSSAVGIVGEPTVEGVAAILGALLAGSAVSILPGLVRGADPDQWADSTLNRFANIGVTTVFSHGSYLEQLRTRDSSLVIHDDAEVAHAQRSTTLELGAPLGEFAVLQGTAGSTGTPRTAQLRPDAVLANLRGLAERVGLAGSDIGCSWLPLYHDMGLTFLLSAAVGGTETWQAPTTAFASAPFSWVHWLTESRATLTAAPNMAYGLIGKYSRRLTDVDLSAMRFALNGGEPVDIDGTARFGTELSRFGFDPGALSPSYGLAESSCAVTVPVPGVGLKVDEITVTTEAGSSTQKLAVLGHAIAGMEVRLQPGDEDAGVVDREVGEVEIRGTSMMSGYRGEAPLDPGEWFPTGDLGYLTDDGLVICGRKKELITVAGRNIFPTEIERIAARVKGVREGAVVAVGTNERAVRPGLVIAAEFRGPDEAGARSEVVQRVASECGVVPADVVFLAPGSLPRTSSGKLRRLEVKRQLEESKG</sequence>
<accession>A0QUA1</accession>
<accession>I7FIE2</accession>
<organism>
    <name type="scientific">Mycolicibacterium smegmatis (strain ATCC 700084 / mc(2)155)</name>
    <name type="common">Mycobacterium smegmatis</name>
    <dbReference type="NCBI Taxonomy" id="246196"/>
    <lineage>
        <taxon>Bacteria</taxon>
        <taxon>Bacillati</taxon>
        <taxon>Actinomycetota</taxon>
        <taxon>Actinomycetes</taxon>
        <taxon>Mycobacteriales</taxon>
        <taxon>Mycobacteriaceae</taxon>
        <taxon>Mycolicibacterium</taxon>
    </lineage>
</organism>
<protein>
    <recommendedName>
        <fullName evidence="3">Medium/long-chain-fatty-acid--[acyl-carrier-protein] ligase MbtM</fullName>
        <ecNumber evidence="1">6.2.1.20</ecNumber>
        <ecNumber evidence="1">6.2.1.47</ecNumber>
    </recommendedName>
    <alternativeName>
        <fullName evidence="3">Fatty acyl-[acyl-carrier-protein] synthetase</fullName>
        <shortName evidence="3">Fatty acyl-ACP synthetase</shortName>
    </alternativeName>
    <alternativeName>
        <fullName evidence="2">Mycobactin fatty acyl-AMP ligase</fullName>
    </alternativeName>
    <alternativeName>
        <fullName evidence="3">Mycobactin synthetase protein M</fullName>
    </alternativeName>
</protein>
<dbReference type="EC" id="6.2.1.20" evidence="1"/>
<dbReference type="EC" id="6.2.1.47" evidence="1"/>
<dbReference type="EMBL" id="CP000480">
    <property type="protein sequence ID" value="ABK75882.1"/>
    <property type="molecule type" value="Genomic_DNA"/>
</dbReference>
<dbReference type="EMBL" id="CP001663">
    <property type="protein sequence ID" value="AFP38553.1"/>
    <property type="molecule type" value="Genomic_DNA"/>
</dbReference>
<dbReference type="RefSeq" id="WP_003893504.1">
    <property type="nucleotide sequence ID" value="NZ_SIJM01000021.1"/>
</dbReference>
<dbReference type="RefSeq" id="YP_886489.1">
    <property type="nucleotide sequence ID" value="NC_008596.1"/>
</dbReference>
<dbReference type="SMR" id="A0QUA1"/>
<dbReference type="STRING" id="246196.MSMEG_2131"/>
<dbReference type="iPTMnet" id="A0QUA1"/>
<dbReference type="PaxDb" id="246196-MSMEI_2082"/>
<dbReference type="GeneID" id="93456932"/>
<dbReference type="KEGG" id="msb:LJ00_10615"/>
<dbReference type="KEGG" id="msg:MSMEI_2082"/>
<dbReference type="KEGG" id="msm:MSMEG_2131"/>
<dbReference type="PATRIC" id="fig|246196.19.peg.2105"/>
<dbReference type="eggNOG" id="COG0318">
    <property type="taxonomic scope" value="Bacteria"/>
</dbReference>
<dbReference type="OrthoDB" id="3671040at2"/>
<dbReference type="UniPathway" id="UPA00011"/>
<dbReference type="Proteomes" id="UP000000757">
    <property type="component" value="Chromosome"/>
</dbReference>
<dbReference type="Proteomes" id="UP000006158">
    <property type="component" value="Chromosome"/>
</dbReference>
<dbReference type="GO" id="GO:0005886">
    <property type="term" value="C:plasma membrane"/>
    <property type="evidence" value="ECO:0007669"/>
    <property type="project" value="TreeGrafter"/>
</dbReference>
<dbReference type="GO" id="GO:0070566">
    <property type="term" value="F:adenylyltransferase activity"/>
    <property type="evidence" value="ECO:0007669"/>
    <property type="project" value="TreeGrafter"/>
</dbReference>
<dbReference type="GO" id="GO:0005524">
    <property type="term" value="F:ATP binding"/>
    <property type="evidence" value="ECO:0007669"/>
    <property type="project" value="UniProtKB-KW"/>
</dbReference>
<dbReference type="GO" id="GO:0008922">
    <property type="term" value="F:long-chain fatty acid [acyl-carrier-protein] ligase activity"/>
    <property type="evidence" value="ECO:0007669"/>
    <property type="project" value="UniProtKB-EC"/>
</dbReference>
<dbReference type="GO" id="GO:0006633">
    <property type="term" value="P:fatty acid biosynthetic process"/>
    <property type="evidence" value="ECO:0007669"/>
    <property type="project" value="TreeGrafter"/>
</dbReference>
<dbReference type="Gene3D" id="3.30.300.30">
    <property type="match status" value="1"/>
</dbReference>
<dbReference type="Gene3D" id="3.40.50.12780">
    <property type="entry name" value="N-terminal domain of ligase-like"/>
    <property type="match status" value="1"/>
</dbReference>
<dbReference type="InterPro" id="IPR045851">
    <property type="entry name" value="AMP-bd_C_sf"/>
</dbReference>
<dbReference type="InterPro" id="IPR020845">
    <property type="entry name" value="AMP-binding_CS"/>
</dbReference>
<dbReference type="InterPro" id="IPR000873">
    <property type="entry name" value="AMP-dep_synth/lig_dom"/>
</dbReference>
<dbReference type="InterPro" id="IPR042099">
    <property type="entry name" value="ANL_N_sf"/>
</dbReference>
<dbReference type="NCBIfam" id="NF004510">
    <property type="entry name" value="PRK05851.1"/>
    <property type="match status" value="1"/>
</dbReference>
<dbReference type="PANTHER" id="PTHR22754:SF32">
    <property type="entry name" value="DISCO-INTERACTING PROTEIN 2"/>
    <property type="match status" value="1"/>
</dbReference>
<dbReference type="PANTHER" id="PTHR22754">
    <property type="entry name" value="DISCO-INTERACTING PROTEIN 2 DIP2 -RELATED"/>
    <property type="match status" value="1"/>
</dbReference>
<dbReference type="Pfam" id="PF00501">
    <property type="entry name" value="AMP-binding"/>
    <property type="match status" value="1"/>
</dbReference>
<dbReference type="SUPFAM" id="SSF56801">
    <property type="entry name" value="Acetyl-CoA synthetase-like"/>
    <property type="match status" value="1"/>
</dbReference>
<dbReference type="PROSITE" id="PS00455">
    <property type="entry name" value="AMP_BINDING"/>
    <property type="match status" value="1"/>
</dbReference>
<comment type="function">
    <text evidence="1">Activates lipidic moieties required for mycobactin biosynthesis (PubMed:23935107). Converts medium- to long-chain aliphatic fatty acids into acyl adenylate, which is further transferred on to the phosphopantetheine arm of the carrier protein MbtL (PubMed:23935107). Shows a strong preference for palmitic acid (C16) and cannot use short-chain fatty acids (PubMed:23935107). Proceeds via a Bi Uni Uni Bi ping-pong mechanism. During the first half-reaction (adenylation), fatty acid binds first to the free enzyme, followed by ATP and the release of pyrophosphate to form the adenylate intermediate. During the second half-reaction (ligation), holo-MbtL binds to the enzyme followed by the release of products AMP and acylated MbtL (PubMed:23935107).</text>
</comment>
<comment type="catalytic activity">
    <reaction evidence="1">
        <text>a long-chain fatty acid + holo-[ACP] + ATP = a long-chain fatty acyl-[ACP] + AMP + diphosphate</text>
        <dbReference type="Rhea" id="RHEA:45588"/>
        <dbReference type="Rhea" id="RHEA-COMP:9685"/>
        <dbReference type="Rhea" id="RHEA-COMP:12682"/>
        <dbReference type="ChEBI" id="CHEBI:30616"/>
        <dbReference type="ChEBI" id="CHEBI:33019"/>
        <dbReference type="ChEBI" id="CHEBI:57560"/>
        <dbReference type="ChEBI" id="CHEBI:64479"/>
        <dbReference type="ChEBI" id="CHEBI:133243"/>
        <dbReference type="ChEBI" id="CHEBI:456215"/>
        <dbReference type="EC" id="6.2.1.20"/>
    </reaction>
</comment>
<comment type="catalytic activity">
    <reaction evidence="1">
        <text>a medium-chain fatty acid + holo-[ACP] + ATP = a medium-chain fatty acyl-[ACP] + AMP + diphosphate</text>
        <dbReference type="Rhea" id="RHEA:50460"/>
        <dbReference type="Rhea" id="RHEA-COMP:9685"/>
        <dbReference type="Rhea" id="RHEA-COMP:12681"/>
        <dbReference type="ChEBI" id="CHEBI:30616"/>
        <dbReference type="ChEBI" id="CHEBI:33019"/>
        <dbReference type="ChEBI" id="CHEBI:59558"/>
        <dbReference type="ChEBI" id="CHEBI:64479"/>
        <dbReference type="ChEBI" id="CHEBI:133242"/>
        <dbReference type="ChEBI" id="CHEBI:456215"/>
        <dbReference type="EC" id="6.2.1.47"/>
    </reaction>
</comment>
<comment type="catalytic activity">
    <reaction evidence="1">
        <text>hexadecanoate + holo-[ACP] + ATP = hexadecanoyl-[ACP] + AMP + diphosphate</text>
        <dbReference type="Rhea" id="RHEA:63628"/>
        <dbReference type="Rhea" id="RHEA-COMP:9652"/>
        <dbReference type="Rhea" id="RHEA-COMP:9685"/>
        <dbReference type="ChEBI" id="CHEBI:7896"/>
        <dbReference type="ChEBI" id="CHEBI:30616"/>
        <dbReference type="ChEBI" id="CHEBI:33019"/>
        <dbReference type="ChEBI" id="CHEBI:64479"/>
        <dbReference type="ChEBI" id="CHEBI:78483"/>
        <dbReference type="ChEBI" id="CHEBI:456215"/>
    </reaction>
    <physiologicalReaction direction="left-to-right" evidence="1">
        <dbReference type="Rhea" id="RHEA:63629"/>
    </physiologicalReaction>
</comment>
<comment type="catalytic activity">
    <reaction evidence="1">
        <text>hexadecanoate + ATP + H(+) = hexadecanoyl-AMP + diphosphate</text>
        <dbReference type="Rhea" id="RHEA:43708"/>
        <dbReference type="ChEBI" id="CHEBI:7896"/>
        <dbReference type="ChEBI" id="CHEBI:15378"/>
        <dbReference type="ChEBI" id="CHEBI:30616"/>
        <dbReference type="ChEBI" id="CHEBI:33019"/>
        <dbReference type="ChEBI" id="CHEBI:83627"/>
    </reaction>
    <physiologicalReaction direction="left-to-right" evidence="1">
        <dbReference type="Rhea" id="RHEA:43709"/>
    </physiologicalReaction>
</comment>
<comment type="catalytic activity">
    <reaction evidence="1">
        <text>hexadecanoyl-AMP + holo-[ACP] = hexadecanoyl-[ACP] + AMP + H(+)</text>
        <dbReference type="Rhea" id="RHEA:63624"/>
        <dbReference type="Rhea" id="RHEA-COMP:9652"/>
        <dbReference type="Rhea" id="RHEA-COMP:9685"/>
        <dbReference type="ChEBI" id="CHEBI:15378"/>
        <dbReference type="ChEBI" id="CHEBI:64479"/>
        <dbReference type="ChEBI" id="CHEBI:78483"/>
        <dbReference type="ChEBI" id="CHEBI:83627"/>
        <dbReference type="ChEBI" id="CHEBI:456215"/>
    </reaction>
    <physiologicalReaction direction="left-to-right" evidence="1">
        <dbReference type="Rhea" id="RHEA:63625"/>
    </physiologicalReaction>
</comment>
<comment type="catalytic activity">
    <reaction evidence="1">
        <text>dodecanoate + holo-[ACP] + ATP = dodecanoyl-[ACP] + AMP + diphosphate</text>
        <dbReference type="Rhea" id="RHEA:63620"/>
        <dbReference type="Rhea" id="RHEA-COMP:9644"/>
        <dbReference type="Rhea" id="RHEA-COMP:9685"/>
        <dbReference type="ChEBI" id="CHEBI:18262"/>
        <dbReference type="ChEBI" id="CHEBI:30616"/>
        <dbReference type="ChEBI" id="CHEBI:33019"/>
        <dbReference type="ChEBI" id="CHEBI:64479"/>
        <dbReference type="ChEBI" id="CHEBI:65264"/>
        <dbReference type="ChEBI" id="CHEBI:456215"/>
    </reaction>
    <physiologicalReaction direction="left-to-right" evidence="1">
        <dbReference type="Rhea" id="RHEA:63621"/>
    </physiologicalReaction>
</comment>
<comment type="catalytic activity">
    <reaction evidence="1">
        <text>dodecanoate + ATP + H(+) = dodecanoyl-AMP + diphosphate</text>
        <dbReference type="Rhea" id="RHEA:43712"/>
        <dbReference type="ChEBI" id="CHEBI:15378"/>
        <dbReference type="ChEBI" id="CHEBI:18262"/>
        <dbReference type="ChEBI" id="CHEBI:30616"/>
        <dbReference type="ChEBI" id="CHEBI:33019"/>
        <dbReference type="ChEBI" id="CHEBI:83623"/>
    </reaction>
    <physiologicalReaction direction="left-to-right" evidence="1">
        <dbReference type="Rhea" id="RHEA:43713"/>
    </physiologicalReaction>
</comment>
<comment type="catalytic activity">
    <reaction evidence="1">
        <text>dodecanoyl-AMP + holo-[ACP] = dodecanoyl-[ACP] + AMP + H(+)</text>
        <dbReference type="Rhea" id="RHEA:46504"/>
        <dbReference type="Rhea" id="RHEA-COMP:9644"/>
        <dbReference type="Rhea" id="RHEA-COMP:9685"/>
        <dbReference type="ChEBI" id="CHEBI:15378"/>
        <dbReference type="ChEBI" id="CHEBI:64479"/>
        <dbReference type="ChEBI" id="CHEBI:65264"/>
        <dbReference type="ChEBI" id="CHEBI:83623"/>
        <dbReference type="ChEBI" id="CHEBI:456215"/>
    </reaction>
    <physiologicalReaction direction="left-to-right" evidence="1">
        <dbReference type="Rhea" id="RHEA:46505"/>
    </physiologicalReaction>
</comment>
<comment type="activity regulation">
    <text evidence="1">Reversibly inactivated by post-translational acetylation by Pat in a cAMP-dependent manner and reactivated by Sir2 deacylase.</text>
</comment>
<comment type="biophysicochemical properties">
    <kinetics>
        <KM evidence="1">129 uM for hexanoic acid</KM>
        <KM evidence="1">121 uM for decanoic acid</KM>
        <KM evidence="1">21 uM for lauric acid</KM>
        <KM evidence="1">1.9 uM for palmitic acid</KM>
        <KM evidence="1">15 uM for ATP</KM>
        <KM evidence="1">106 uM for MbtL-holo</KM>
        <text evidence="1">kcat is 0.11 min(-1) with hexanoic acid as substrate. kcat is 1.5 min(-1) with decanoic acid as substrate. kcat is 2.4 min(-1) with lauric acid as substrate. kcat is 4.2 min(-1) with palmitic acid as substrate. kcat is 1.3 min(-1) with ATP as substrate. kcat is 2.0 min(-1) with MbtL-holo as substrate.</text>
    </kinetics>
</comment>
<comment type="pathway">
    <text evidence="1">Siderophore biosynthesis; mycobactin biosynthesis.</text>
</comment>
<comment type="PTM">
    <text evidence="1">Acetylated on Lys-511 and Lys-260 by Pat. Lys-511 is the major acetylation site. Acetylation results in the inactivation of the enzyme.</text>
</comment>
<comment type="similarity">
    <text evidence="3">Belongs to the ATP-dependent AMP-binding enzyme family.</text>
</comment>
<gene>
    <name evidence="2" type="primary">mbtM</name>
    <name evidence="2" type="synonym">fadD33</name>
    <name evidence="4" type="ordered locus">MSMEG_2131</name>
    <name evidence="5" type="ordered locus">MSMEI_2082</name>
</gene>
<keyword id="KW-0007">Acetylation</keyword>
<keyword id="KW-0067">ATP-binding</keyword>
<keyword id="KW-0436">Ligase</keyword>
<keyword id="KW-0547">Nucleotide-binding</keyword>
<keyword id="KW-1185">Reference proteome</keyword>
<proteinExistence type="evidence at protein level"/>
<name>MBTM_MYCS2</name>
<reference key="1">
    <citation type="submission" date="2006-10" db="EMBL/GenBank/DDBJ databases">
        <authorList>
            <person name="Fleischmann R.D."/>
            <person name="Dodson R.J."/>
            <person name="Haft D.H."/>
            <person name="Merkel J.S."/>
            <person name="Nelson W.C."/>
            <person name="Fraser C.M."/>
        </authorList>
    </citation>
    <scope>NUCLEOTIDE SEQUENCE [LARGE SCALE GENOMIC DNA]</scope>
    <source>
        <strain>ATCC 700084 / mc(2)155</strain>
    </source>
</reference>
<reference key="2">
    <citation type="journal article" date="2007" name="Genome Biol.">
        <title>Interrupted coding sequences in Mycobacterium smegmatis: authentic mutations or sequencing errors?</title>
        <authorList>
            <person name="Deshayes C."/>
            <person name="Perrodou E."/>
            <person name="Gallien S."/>
            <person name="Euphrasie D."/>
            <person name="Schaeffer C."/>
            <person name="Van-Dorsselaer A."/>
            <person name="Poch O."/>
            <person name="Lecompte O."/>
            <person name="Reyrat J.-M."/>
        </authorList>
    </citation>
    <scope>NUCLEOTIDE SEQUENCE [LARGE SCALE GENOMIC DNA]</scope>
    <source>
        <strain>ATCC 700084 / mc(2)155</strain>
    </source>
</reference>
<reference key="3">
    <citation type="journal article" date="2009" name="Genome Res.">
        <title>Ortho-proteogenomics: multiple proteomes investigation through orthology and a new MS-based protocol.</title>
        <authorList>
            <person name="Gallien S."/>
            <person name="Perrodou E."/>
            <person name="Carapito C."/>
            <person name="Deshayes C."/>
            <person name="Reyrat J.-M."/>
            <person name="Van Dorsselaer A."/>
            <person name="Poch O."/>
            <person name="Schaeffer C."/>
            <person name="Lecompte O."/>
        </authorList>
    </citation>
    <scope>NUCLEOTIDE SEQUENCE [LARGE SCALE GENOMIC DNA]</scope>
    <source>
        <strain>ATCC 700084 / mc(2)155</strain>
    </source>
</reference>
<reference key="4">
    <citation type="journal article" date="2013" name="J. Biol. Chem.">
        <title>Mechanism and regulation of mycobactin fatty acyl-AMP ligase FadD33.</title>
        <authorList>
            <person name="Vergnolle O."/>
            <person name="Xu H."/>
            <person name="Blanchard J.S."/>
        </authorList>
    </citation>
    <scope>FUNCTION</scope>
    <scope>CATALYTIC ACTIVITY</scope>
    <scope>REACTION MECHANISM</scope>
    <scope>ACTIVITY REGULATION</scope>
    <scope>BIOPHYSICOCHEMICAL PROPERTIES</scope>
    <scope>PATHWAY</scope>
    <scope>ACETYLATION AT LYS-260 AND LYS-511</scope>
    <scope>MUTAGENESIS OF LYS-260 AND LYS-511</scope>
    <source>
        <strain>ATCC 700084 / mc(2)155</strain>
    </source>
</reference>
<feature type="chain" id="PRO_0000450445" description="Medium/long-chain-fatty-acid--[acyl-carrier-protein] ligase MbtM">
    <location>
        <begin position="1"/>
        <end position="526"/>
    </location>
</feature>
<feature type="modified residue" description="N6-acetyllysine; by Pat" evidence="1">
    <location>
        <position position="260"/>
    </location>
</feature>
<feature type="modified residue" description="N6-acetyllysine; by Pat" evidence="1">
    <location>
        <position position="511"/>
    </location>
</feature>
<feature type="mutagenesis site" description="Still active. Slight decrease in acetylation by Pat. Loss of acetylation; when associated with A-511." evidence="1">
    <original>K</original>
    <variation>A</variation>
    <location>
        <position position="260"/>
    </location>
</feature>
<feature type="mutagenesis site" description="Loss of activity. Strong decrease in acetylation by Pat. Loss of acetylation; when associated with A-260." evidence="1">
    <original>K</original>
    <variation>A</variation>
    <location>
        <position position="511"/>
    </location>
</feature>
<evidence type="ECO:0000269" key="1">
    <source>
    </source>
</evidence>
<evidence type="ECO:0000303" key="2">
    <source>
    </source>
</evidence>
<evidence type="ECO:0000305" key="3"/>
<evidence type="ECO:0000312" key="4">
    <source>
        <dbReference type="EMBL" id="ABK75882.1"/>
    </source>
</evidence>
<evidence type="ECO:0000312" key="5">
    <source>
        <dbReference type="EMBL" id="AFP38553.1"/>
    </source>
</evidence>